<keyword id="KW-0028">Amino-acid biosynthesis</keyword>
<keyword id="KW-0057">Aromatic amino acid biosynthesis</keyword>
<keyword id="KW-0170">Cobalt</keyword>
<keyword id="KW-0963">Cytoplasm</keyword>
<keyword id="KW-0456">Lyase</keyword>
<keyword id="KW-0479">Metal-binding</keyword>
<keyword id="KW-0520">NAD</keyword>
<keyword id="KW-0547">Nucleotide-binding</keyword>
<keyword id="KW-1185">Reference proteome</keyword>
<keyword id="KW-0862">Zinc</keyword>
<proteinExistence type="inferred from homology"/>
<feature type="chain" id="PRO_0000140771" description="3-dehydroquinate synthase">
    <location>
        <begin position="1"/>
        <end position="368"/>
    </location>
</feature>
<feature type="binding site" evidence="1">
    <location>
        <begin position="71"/>
        <end position="76"/>
    </location>
    <ligand>
        <name>NAD(+)</name>
        <dbReference type="ChEBI" id="CHEBI:57540"/>
    </ligand>
</feature>
<feature type="binding site" evidence="1">
    <location>
        <begin position="105"/>
        <end position="109"/>
    </location>
    <ligand>
        <name>NAD(+)</name>
        <dbReference type="ChEBI" id="CHEBI:57540"/>
    </ligand>
</feature>
<feature type="binding site" evidence="1">
    <location>
        <begin position="129"/>
        <end position="130"/>
    </location>
    <ligand>
        <name>NAD(+)</name>
        <dbReference type="ChEBI" id="CHEBI:57540"/>
    </ligand>
</feature>
<feature type="binding site" evidence="1">
    <location>
        <position position="142"/>
    </location>
    <ligand>
        <name>NAD(+)</name>
        <dbReference type="ChEBI" id="CHEBI:57540"/>
    </ligand>
</feature>
<feature type="binding site" evidence="1">
    <location>
        <position position="151"/>
    </location>
    <ligand>
        <name>NAD(+)</name>
        <dbReference type="ChEBI" id="CHEBI:57540"/>
    </ligand>
</feature>
<feature type="binding site" evidence="1">
    <location>
        <begin position="169"/>
        <end position="172"/>
    </location>
    <ligand>
        <name>NAD(+)</name>
        <dbReference type="ChEBI" id="CHEBI:57540"/>
    </ligand>
</feature>
<feature type="binding site" evidence="1">
    <location>
        <position position="184"/>
    </location>
    <ligand>
        <name>Zn(2+)</name>
        <dbReference type="ChEBI" id="CHEBI:29105"/>
    </ligand>
</feature>
<feature type="binding site" evidence="1">
    <location>
        <position position="247"/>
    </location>
    <ligand>
        <name>Zn(2+)</name>
        <dbReference type="ChEBI" id="CHEBI:29105"/>
    </ligand>
</feature>
<feature type="binding site" evidence="1">
    <location>
        <position position="264"/>
    </location>
    <ligand>
        <name>Zn(2+)</name>
        <dbReference type="ChEBI" id="CHEBI:29105"/>
    </ligand>
</feature>
<organism>
    <name type="scientific">Ralstonia nicotianae (strain ATCC BAA-1114 / GMI1000)</name>
    <name type="common">Ralstonia solanacearum</name>
    <dbReference type="NCBI Taxonomy" id="267608"/>
    <lineage>
        <taxon>Bacteria</taxon>
        <taxon>Pseudomonadati</taxon>
        <taxon>Pseudomonadota</taxon>
        <taxon>Betaproteobacteria</taxon>
        <taxon>Burkholderiales</taxon>
        <taxon>Burkholderiaceae</taxon>
        <taxon>Ralstonia</taxon>
        <taxon>Ralstonia solanacearum species complex</taxon>
    </lineage>
</organism>
<dbReference type="EC" id="4.2.3.4" evidence="1"/>
<dbReference type="EMBL" id="AL646052">
    <property type="protein sequence ID" value="CAD16678.1"/>
    <property type="molecule type" value="Genomic_DNA"/>
</dbReference>
<dbReference type="RefSeq" id="WP_011002874.1">
    <property type="nucleotide sequence ID" value="NC_003295.1"/>
</dbReference>
<dbReference type="SMR" id="Q8XV62"/>
<dbReference type="STRING" id="267608.RSc2969"/>
<dbReference type="EnsemblBacteria" id="CAD16678">
    <property type="protein sequence ID" value="CAD16678"/>
    <property type="gene ID" value="RSc2969"/>
</dbReference>
<dbReference type="KEGG" id="rso:RSc2969"/>
<dbReference type="eggNOG" id="COG0337">
    <property type="taxonomic scope" value="Bacteria"/>
</dbReference>
<dbReference type="HOGENOM" id="CLU_001201_0_2_4"/>
<dbReference type="UniPathway" id="UPA00053">
    <property type="reaction ID" value="UER00085"/>
</dbReference>
<dbReference type="Proteomes" id="UP000001436">
    <property type="component" value="Chromosome"/>
</dbReference>
<dbReference type="GO" id="GO:0005737">
    <property type="term" value="C:cytoplasm"/>
    <property type="evidence" value="ECO:0007669"/>
    <property type="project" value="UniProtKB-SubCell"/>
</dbReference>
<dbReference type="GO" id="GO:0003856">
    <property type="term" value="F:3-dehydroquinate synthase activity"/>
    <property type="evidence" value="ECO:0007669"/>
    <property type="project" value="UniProtKB-UniRule"/>
</dbReference>
<dbReference type="GO" id="GO:0046872">
    <property type="term" value="F:metal ion binding"/>
    <property type="evidence" value="ECO:0007669"/>
    <property type="project" value="UniProtKB-KW"/>
</dbReference>
<dbReference type="GO" id="GO:0000166">
    <property type="term" value="F:nucleotide binding"/>
    <property type="evidence" value="ECO:0007669"/>
    <property type="project" value="UniProtKB-KW"/>
</dbReference>
<dbReference type="GO" id="GO:0008652">
    <property type="term" value="P:amino acid biosynthetic process"/>
    <property type="evidence" value="ECO:0007669"/>
    <property type="project" value="UniProtKB-KW"/>
</dbReference>
<dbReference type="GO" id="GO:0009073">
    <property type="term" value="P:aromatic amino acid family biosynthetic process"/>
    <property type="evidence" value="ECO:0007669"/>
    <property type="project" value="UniProtKB-KW"/>
</dbReference>
<dbReference type="GO" id="GO:0009423">
    <property type="term" value="P:chorismate biosynthetic process"/>
    <property type="evidence" value="ECO:0007669"/>
    <property type="project" value="UniProtKB-UniRule"/>
</dbReference>
<dbReference type="CDD" id="cd08195">
    <property type="entry name" value="DHQS"/>
    <property type="match status" value="1"/>
</dbReference>
<dbReference type="FunFam" id="3.40.50.1970:FF:000001">
    <property type="entry name" value="3-dehydroquinate synthase"/>
    <property type="match status" value="1"/>
</dbReference>
<dbReference type="Gene3D" id="3.40.50.1970">
    <property type="match status" value="1"/>
</dbReference>
<dbReference type="Gene3D" id="1.20.1090.10">
    <property type="entry name" value="Dehydroquinate synthase-like - alpha domain"/>
    <property type="match status" value="1"/>
</dbReference>
<dbReference type="HAMAP" id="MF_00110">
    <property type="entry name" value="DHQ_synthase"/>
    <property type="match status" value="1"/>
</dbReference>
<dbReference type="InterPro" id="IPR050071">
    <property type="entry name" value="Dehydroquinate_synthase"/>
</dbReference>
<dbReference type="InterPro" id="IPR016037">
    <property type="entry name" value="DHQ_synth_AroB"/>
</dbReference>
<dbReference type="InterPro" id="IPR030963">
    <property type="entry name" value="DHQ_synth_fam"/>
</dbReference>
<dbReference type="InterPro" id="IPR030960">
    <property type="entry name" value="DHQS/DOIS_N"/>
</dbReference>
<dbReference type="InterPro" id="IPR056179">
    <property type="entry name" value="DHQS_C"/>
</dbReference>
<dbReference type="NCBIfam" id="TIGR01357">
    <property type="entry name" value="aroB"/>
    <property type="match status" value="1"/>
</dbReference>
<dbReference type="PANTHER" id="PTHR43622">
    <property type="entry name" value="3-DEHYDROQUINATE SYNTHASE"/>
    <property type="match status" value="1"/>
</dbReference>
<dbReference type="PANTHER" id="PTHR43622:SF7">
    <property type="entry name" value="3-DEHYDROQUINATE SYNTHASE, CHLOROPLASTIC"/>
    <property type="match status" value="1"/>
</dbReference>
<dbReference type="Pfam" id="PF01761">
    <property type="entry name" value="DHQ_synthase"/>
    <property type="match status" value="1"/>
</dbReference>
<dbReference type="Pfam" id="PF24621">
    <property type="entry name" value="DHQS_C"/>
    <property type="match status" value="1"/>
</dbReference>
<dbReference type="PIRSF" id="PIRSF001455">
    <property type="entry name" value="DHQ_synth"/>
    <property type="match status" value="1"/>
</dbReference>
<dbReference type="SUPFAM" id="SSF56796">
    <property type="entry name" value="Dehydroquinate synthase-like"/>
    <property type="match status" value="1"/>
</dbReference>
<accession>Q8XV62</accession>
<gene>
    <name evidence="1" type="primary">aroB</name>
    <name type="ordered locus">RSc2969</name>
    <name type="ORF">RS01328</name>
</gene>
<protein>
    <recommendedName>
        <fullName evidence="1">3-dehydroquinate synthase</fullName>
        <shortName evidence="1">DHQS</shortName>
        <ecNumber evidence="1">4.2.3.4</ecNumber>
    </recommendedName>
</protein>
<evidence type="ECO:0000255" key="1">
    <source>
        <dbReference type="HAMAP-Rule" id="MF_00110"/>
    </source>
</evidence>
<sequence>MITVDVDLGERAYPIHIGTGLLSQAELFAPHIRGTRAVIVTNETVAPLYAARVEAAIRSLGKTVDMVVLPDGESFKTWETLNRIFDALLASGADRKTTLVALGGGVIGDMTGFAAASYMRGVPFIQVPTTLLSQVDSSVGGKTGINHPLGKNMIGAFHQPQAVLADIDTLRTLPPRELAAGMAEVIKHGAIADADYFAWIERHIAGLNACDADLMAGAVRGSVQIKAAVVAQDERESGLRAILNFGHTFGHAIEAGLGYGEWLHGEAVGCGMAMAADLSHRLGFIDIDTRNRVTALTRAANLPVVAPDLGVARFIDLMRVDKKAEAGEIKFVLLRKLGQAFVTTVPDTDLRATLQHAVLRPPTEAPVA</sequence>
<reference key="1">
    <citation type="journal article" date="2002" name="Nature">
        <title>Genome sequence of the plant pathogen Ralstonia solanacearum.</title>
        <authorList>
            <person name="Salanoubat M."/>
            <person name="Genin S."/>
            <person name="Artiguenave F."/>
            <person name="Gouzy J."/>
            <person name="Mangenot S."/>
            <person name="Arlat M."/>
            <person name="Billault A."/>
            <person name="Brottier P."/>
            <person name="Camus J.-C."/>
            <person name="Cattolico L."/>
            <person name="Chandler M."/>
            <person name="Choisne N."/>
            <person name="Claudel-Renard C."/>
            <person name="Cunnac S."/>
            <person name="Demange N."/>
            <person name="Gaspin C."/>
            <person name="Lavie M."/>
            <person name="Moisan A."/>
            <person name="Robert C."/>
            <person name="Saurin W."/>
            <person name="Schiex T."/>
            <person name="Siguier P."/>
            <person name="Thebault P."/>
            <person name="Whalen M."/>
            <person name="Wincker P."/>
            <person name="Levy M."/>
            <person name="Weissenbach J."/>
            <person name="Boucher C.A."/>
        </authorList>
    </citation>
    <scope>NUCLEOTIDE SEQUENCE [LARGE SCALE GENOMIC DNA]</scope>
    <source>
        <strain>ATCC BAA-1114 / GMI1000</strain>
    </source>
</reference>
<name>AROB_RALN1</name>
<comment type="function">
    <text evidence="1">Catalyzes the conversion of 3-deoxy-D-arabino-heptulosonate 7-phosphate (DAHP) to dehydroquinate (DHQ).</text>
</comment>
<comment type="catalytic activity">
    <reaction evidence="1">
        <text>7-phospho-2-dehydro-3-deoxy-D-arabino-heptonate = 3-dehydroquinate + phosphate</text>
        <dbReference type="Rhea" id="RHEA:21968"/>
        <dbReference type="ChEBI" id="CHEBI:32364"/>
        <dbReference type="ChEBI" id="CHEBI:43474"/>
        <dbReference type="ChEBI" id="CHEBI:58394"/>
        <dbReference type="EC" id="4.2.3.4"/>
    </reaction>
</comment>
<comment type="cofactor">
    <cofactor evidence="1">
        <name>NAD(+)</name>
        <dbReference type="ChEBI" id="CHEBI:57540"/>
    </cofactor>
</comment>
<comment type="cofactor">
    <cofactor evidence="1">
        <name>Co(2+)</name>
        <dbReference type="ChEBI" id="CHEBI:48828"/>
    </cofactor>
    <cofactor evidence="1">
        <name>Zn(2+)</name>
        <dbReference type="ChEBI" id="CHEBI:29105"/>
    </cofactor>
    <text evidence="1">Binds 1 divalent metal cation per subunit. Can use either Co(2+) or Zn(2+).</text>
</comment>
<comment type="pathway">
    <text evidence="1">Metabolic intermediate biosynthesis; chorismate biosynthesis; chorismate from D-erythrose 4-phosphate and phosphoenolpyruvate: step 2/7.</text>
</comment>
<comment type="subcellular location">
    <subcellularLocation>
        <location evidence="1">Cytoplasm</location>
    </subcellularLocation>
</comment>
<comment type="similarity">
    <text evidence="1">Belongs to the sugar phosphate cyclases superfamily. Dehydroquinate synthase family.</text>
</comment>